<proteinExistence type="evidence at protein level"/>
<name>KAX3V_OLIMR</name>
<keyword id="KW-0903">Direct protein sequencing</keyword>
<keyword id="KW-1015">Disulfide bond</keyword>
<keyword id="KW-0872">Ion channel impairing toxin</keyword>
<keyword id="KW-0528">Neurotoxin</keyword>
<keyword id="KW-0632">Potassium channel impairing toxin</keyword>
<keyword id="KW-0964">Secreted</keyword>
<keyword id="KW-0800">Toxin</keyword>
<keyword id="KW-1220">Voltage-gated potassium channel impairing toxin</keyword>
<accession>P0DUK8</accession>
<reference key="1">
    <citation type="journal article" date="2021" name="Toxins">
        <title>BmK NSPK, a potent potassium channel inhibitor from scorpion Buthus martensii Karsch, promotes neurite outgrowth via NGF/TrkA signaling pathway.</title>
        <authorList>
            <person name="Zhao F."/>
            <person name="Zou X."/>
            <person name="Li S."/>
            <person name="He J."/>
            <person name="Xi C."/>
            <person name="Tang Q."/>
            <person name="Wang Y."/>
            <person name="Cao Z."/>
        </authorList>
    </citation>
    <scope>PROTEIN SEQUENCE</scope>
    <scope>SUBCELLULAR LOCATION</scope>
    <scope>FUNCTION</scope>
    <scope>MASS SPECTROMETRY</scope>
    <scope>3D-STRUCTURE MODELING</scope>
    <source>
        <tissue>Venom</tissue>
    </source>
</reference>
<dbReference type="SMR" id="P0DUK8"/>
<dbReference type="GO" id="GO:0005576">
    <property type="term" value="C:extracellular region"/>
    <property type="evidence" value="ECO:0007669"/>
    <property type="project" value="UniProtKB-SubCell"/>
</dbReference>
<dbReference type="GO" id="GO:0008200">
    <property type="term" value="F:ion channel inhibitor activity"/>
    <property type="evidence" value="ECO:0007669"/>
    <property type="project" value="InterPro"/>
</dbReference>
<dbReference type="GO" id="GO:0015459">
    <property type="term" value="F:potassium channel regulator activity"/>
    <property type="evidence" value="ECO:0007669"/>
    <property type="project" value="UniProtKB-KW"/>
</dbReference>
<dbReference type="GO" id="GO:0090729">
    <property type="term" value="F:toxin activity"/>
    <property type="evidence" value="ECO:0007669"/>
    <property type="project" value="UniProtKB-KW"/>
</dbReference>
<dbReference type="Gene3D" id="3.30.30.10">
    <property type="entry name" value="Knottin, scorpion toxin-like"/>
    <property type="match status" value="1"/>
</dbReference>
<dbReference type="InterPro" id="IPR036574">
    <property type="entry name" value="Scorpion_toxin-like_sf"/>
</dbReference>
<dbReference type="InterPro" id="IPR001947">
    <property type="entry name" value="Scorpion_toxinS_K_inh"/>
</dbReference>
<dbReference type="Pfam" id="PF00451">
    <property type="entry name" value="Toxin_2"/>
    <property type="match status" value="1"/>
</dbReference>
<dbReference type="SUPFAM" id="SSF57095">
    <property type="entry name" value="Scorpion toxin-like"/>
    <property type="match status" value="1"/>
</dbReference>
<sequence length="38" mass="3966">VGKNVICIHSGQCLIPCIDAGMRFGICKNGICDCTPKG</sequence>
<comment type="function">
    <text evidence="2">Blocks voltage-gated potassium (Kv) channel and augments neurite extension via NGF/TrkA signaling pathway.</text>
</comment>
<comment type="subcellular location">
    <subcellularLocation>
        <location evidence="2">Secreted</location>
    </subcellularLocation>
</comment>
<comment type="tissue specificity">
    <text evidence="5">Expressed by the venom gland.</text>
</comment>
<comment type="domain">
    <text evidence="4">Has the structural arrangement of an alpha-helix connected to antiparallel beta-sheets by disulfide bonds (CS-alpha/beta).</text>
</comment>
<comment type="mass spectrometry" mass="3962.9" method="Electrospray" evidence="2"/>
<comment type="similarity">
    <text evidence="4">Belongs to the short scorpion toxin superfamily. Potassium channel inhibitor family. Alpha-KTx 03 subfamily.</text>
</comment>
<feature type="peptide" id="PRO_0000452716" description="Toxin BmK NSPK" evidence="2">
    <location>
        <begin position="1"/>
        <end position="38"/>
    </location>
</feature>
<feature type="disulfide bond" evidence="1">
    <location>
        <begin position="7"/>
        <end position="27"/>
    </location>
</feature>
<feature type="disulfide bond" evidence="1">
    <location>
        <begin position="13"/>
        <end position="32"/>
    </location>
</feature>
<feature type="disulfide bond" evidence="1">
    <location>
        <begin position="17"/>
        <end position="34"/>
    </location>
</feature>
<evidence type="ECO:0000250" key="1">
    <source>
        <dbReference type="UniProtKB" id="P86396"/>
    </source>
</evidence>
<evidence type="ECO:0000269" key="2">
    <source>
    </source>
</evidence>
<evidence type="ECO:0000303" key="3">
    <source>
    </source>
</evidence>
<evidence type="ECO:0000305" key="4"/>
<evidence type="ECO:0000305" key="5">
    <source>
    </source>
</evidence>
<protein>
    <recommendedName>
        <fullName evidence="3">Toxin BmK NSPK</fullName>
    </recommendedName>
    <alternativeName>
        <fullName evidence="3">Buthus martensii Karsch neurite-stimulating peptide targeting Kv channels</fullName>
    </alternativeName>
</protein>
<organism>
    <name type="scientific">Olivierus martensii</name>
    <name type="common">Manchurian scorpion</name>
    <name type="synonym">Mesobuthus martensii</name>
    <dbReference type="NCBI Taxonomy" id="34649"/>
    <lineage>
        <taxon>Eukaryota</taxon>
        <taxon>Metazoa</taxon>
        <taxon>Ecdysozoa</taxon>
        <taxon>Arthropoda</taxon>
        <taxon>Chelicerata</taxon>
        <taxon>Arachnida</taxon>
        <taxon>Scorpiones</taxon>
        <taxon>Buthida</taxon>
        <taxon>Buthoidea</taxon>
        <taxon>Buthidae</taxon>
        <taxon>Olivierus</taxon>
    </lineage>
</organism>